<accession>A4QB97</accession>
<evidence type="ECO:0000255" key="1">
    <source>
        <dbReference type="HAMAP-Rule" id="MF_00694"/>
    </source>
</evidence>
<reference key="1">
    <citation type="journal article" date="2007" name="Microbiology">
        <title>Comparative analysis of the Corynebacterium glutamicum group and complete genome sequence of strain R.</title>
        <authorList>
            <person name="Yukawa H."/>
            <person name="Omumasaba C.A."/>
            <person name="Nonaka H."/>
            <person name="Kos P."/>
            <person name="Okai N."/>
            <person name="Suzuki N."/>
            <person name="Suda M."/>
            <person name="Tsuge Y."/>
            <person name="Watanabe J."/>
            <person name="Ikeda Y."/>
            <person name="Vertes A.A."/>
            <person name="Inui M."/>
        </authorList>
    </citation>
    <scope>NUCLEOTIDE SEQUENCE [LARGE SCALE GENOMIC DNA]</scope>
    <source>
        <strain>R</strain>
    </source>
</reference>
<protein>
    <recommendedName>
        <fullName evidence="1">Probable 5-dehydro-4-deoxyglucarate dehydratase</fullName>
        <ecNumber evidence="1">4.2.1.41</ecNumber>
    </recommendedName>
    <alternativeName>
        <fullName evidence="1">5-keto-4-deoxy-glucarate dehydratase</fullName>
        <shortName evidence="1">KDGDH</shortName>
    </alternativeName>
</protein>
<organism>
    <name type="scientific">Corynebacterium glutamicum (strain R)</name>
    <dbReference type="NCBI Taxonomy" id="340322"/>
    <lineage>
        <taxon>Bacteria</taxon>
        <taxon>Bacillati</taxon>
        <taxon>Actinomycetota</taxon>
        <taxon>Actinomycetes</taxon>
        <taxon>Mycobacteriales</taxon>
        <taxon>Corynebacteriaceae</taxon>
        <taxon>Corynebacterium</taxon>
    </lineage>
</organism>
<keyword id="KW-0456">Lyase</keyword>
<name>KDGD_CORGB</name>
<dbReference type="EC" id="4.2.1.41" evidence="1"/>
<dbReference type="EMBL" id="AP009044">
    <property type="protein sequence ID" value="BAF53494.1"/>
    <property type="molecule type" value="Genomic_DNA"/>
</dbReference>
<dbReference type="RefSeq" id="WP_003855604.1">
    <property type="nucleotide sequence ID" value="NC_009342.1"/>
</dbReference>
<dbReference type="SMR" id="A4QB97"/>
<dbReference type="KEGG" id="cgt:cgR_0526"/>
<dbReference type="HOGENOM" id="CLU_049343_5_2_11"/>
<dbReference type="PhylomeDB" id="A4QB97"/>
<dbReference type="UniPathway" id="UPA00564">
    <property type="reaction ID" value="UER00628"/>
</dbReference>
<dbReference type="Proteomes" id="UP000006698">
    <property type="component" value="Chromosome"/>
</dbReference>
<dbReference type="GO" id="GO:0008840">
    <property type="term" value="F:4-hydroxy-tetrahydrodipicolinate synthase activity"/>
    <property type="evidence" value="ECO:0007669"/>
    <property type="project" value="TreeGrafter"/>
</dbReference>
<dbReference type="GO" id="GO:0047448">
    <property type="term" value="F:5-dehydro-4-deoxyglucarate dehydratase activity"/>
    <property type="evidence" value="ECO:0007669"/>
    <property type="project" value="UniProtKB-UniRule"/>
</dbReference>
<dbReference type="GO" id="GO:0042838">
    <property type="term" value="P:D-glucarate catabolic process"/>
    <property type="evidence" value="ECO:0007669"/>
    <property type="project" value="UniProtKB-UniRule"/>
</dbReference>
<dbReference type="CDD" id="cd00951">
    <property type="entry name" value="KDGDH"/>
    <property type="match status" value="1"/>
</dbReference>
<dbReference type="Gene3D" id="3.20.20.70">
    <property type="entry name" value="Aldolase class I"/>
    <property type="match status" value="1"/>
</dbReference>
<dbReference type="HAMAP" id="MF_00694">
    <property type="entry name" value="KDGDH"/>
    <property type="match status" value="1"/>
</dbReference>
<dbReference type="InterPro" id="IPR013785">
    <property type="entry name" value="Aldolase_TIM"/>
</dbReference>
<dbReference type="InterPro" id="IPR002220">
    <property type="entry name" value="DapA-like"/>
</dbReference>
<dbReference type="InterPro" id="IPR017655">
    <property type="entry name" value="Dehydro-deoxyglucarate_dehyd"/>
</dbReference>
<dbReference type="NCBIfam" id="NF002958">
    <property type="entry name" value="PRK03620.1"/>
    <property type="match status" value="1"/>
</dbReference>
<dbReference type="PANTHER" id="PTHR12128:SF19">
    <property type="entry name" value="5-DEHYDRO-4-DEOXYGLUCARATE DEHYDRATASE 2-RELATED"/>
    <property type="match status" value="1"/>
</dbReference>
<dbReference type="PANTHER" id="PTHR12128">
    <property type="entry name" value="DIHYDRODIPICOLINATE SYNTHASE"/>
    <property type="match status" value="1"/>
</dbReference>
<dbReference type="Pfam" id="PF00701">
    <property type="entry name" value="DHDPS"/>
    <property type="match status" value="1"/>
</dbReference>
<dbReference type="PIRSF" id="PIRSF001365">
    <property type="entry name" value="DHDPS"/>
    <property type="match status" value="1"/>
</dbReference>
<dbReference type="SMART" id="SM01130">
    <property type="entry name" value="DHDPS"/>
    <property type="match status" value="1"/>
</dbReference>
<dbReference type="SUPFAM" id="SSF51569">
    <property type="entry name" value="Aldolase"/>
    <property type="match status" value="1"/>
</dbReference>
<proteinExistence type="inferred from homology"/>
<sequence>MARFSPQDLADHLKDGLLSFPATAFQDDLEVDEVAYVEHIEWQSSYPVAGLFAAGGTGEGFSLTVEENHRVTQLAVQASSPEVPVLGSATGSTKSAIANAQGAEAAGAEGVLLLPPYLTECDAEGLYNHAAAVCESTSLGVIVYNRANAIYSPEVIARLSERYPNFIGFKDGTGNIEHLAKITTLCGDRLFYLGGLPTAETFALPLLQMGMSTYSSAMFNFIPDFALSFYADVRAQDSAAVKQKLSDFVLPYLDIRDRAQGYGVSIVKGGLKAVGRNAGGVRPPLRNLSEQDIADLSDLLATSGAGSYRLPVEVKA</sequence>
<comment type="catalytic activity">
    <reaction evidence="1">
        <text>5-dehydro-4-deoxy-D-glucarate + H(+) = 2,5-dioxopentanoate + CO2 + H2O</text>
        <dbReference type="Rhea" id="RHEA:24608"/>
        <dbReference type="ChEBI" id="CHEBI:15377"/>
        <dbReference type="ChEBI" id="CHEBI:15378"/>
        <dbReference type="ChEBI" id="CHEBI:16526"/>
        <dbReference type="ChEBI" id="CHEBI:42819"/>
        <dbReference type="ChEBI" id="CHEBI:58136"/>
        <dbReference type="EC" id="4.2.1.41"/>
    </reaction>
</comment>
<comment type="pathway">
    <text evidence="1">Carbohydrate acid metabolism; D-glucarate degradation; 2,5-dioxopentanoate from D-glucarate: step 2/2.</text>
</comment>
<comment type="similarity">
    <text evidence="1">Belongs to the DapA family.</text>
</comment>
<feature type="chain" id="PRO_1000045402" description="Probable 5-dehydro-4-deoxyglucarate dehydratase">
    <location>
        <begin position="1"/>
        <end position="316"/>
    </location>
</feature>
<gene>
    <name type="ordered locus">cgR_0526</name>
</gene>